<sequence length="443" mass="49070">MSFLWSLGSFIIAIAVLVSVHEYGHFWAARKCGIKVHRFSIGFGKVIWKRIDKYGTEFAVSMIPLGGYVKMLDGRNEVVPAEQKSQAFDSKSVLQRSFVIIAGPLANFIFAIFAYWVIYLYGMPTVKPVIESITPNSIAAQAHIEPNTQILTIDGEETQDWETINMLLATKMGEPNVEISLSPFNSNIEQQRTLNLTNWTFDPEKESAFEALGIMPMRPKIEMVLSKVVQNSPAEKAGLQIGDKILKENLTALPWQDFIKQVEQGESFSIKVERNGETFDKVLTPVRNQNGKWFVGVSPALTKLADEYRTELKYGILESLQKGIEKTGQLSLLTLKILGKLLTGDLSLNNLSGPISIAKGAGASANIGLVYFLSFMALISVNLGIMNLFPLPVLDGGHLVFLTMEAVKGKPVSERVQSICYRIGAALLLSLTVFALFNDFLRL</sequence>
<reference key="1">
    <citation type="journal article" date="1995" name="Science">
        <title>Whole-genome random sequencing and assembly of Haemophilus influenzae Rd.</title>
        <authorList>
            <person name="Fleischmann R.D."/>
            <person name="Adams M.D."/>
            <person name="White O."/>
            <person name="Clayton R.A."/>
            <person name="Kirkness E.F."/>
            <person name="Kerlavage A.R."/>
            <person name="Bult C.J."/>
            <person name="Tomb J.-F."/>
            <person name="Dougherty B.A."/>
            <person name="Merrick J.M."/>
            <person name="McKenney K."/>
            <person name="Sutton G.G."/>
            <person name="FitzHugh W."/>
            <person name="Fields C.A."/>
            <person name="Gocayne J.D."/>
            <person name="Scott J.D."/>
            <person name="Shirley R."/>
            <person name="Liu L.-I."/>
            <person name="Glodek A."/>
            <person name="Kelley J.M."/>
            <person name="Weidman J.F."/>
            <person name="Phillips C.A."/>
            <person name="Spriggs T."/>
            <person name="Hedblom E."/>
            <person name="Cotton M.D."/>
            <person name="Utterback T.R."/>
            <person name="Hanna M.C."/>
            <person name="Nguyen D.T."/>
            <person name="Saudek D.M."/>
            <person name="Brandon R.C."/>
            <person name="Fine L.D."/>
            <person name="Fritchman J.L."/>
            <person name="Fuhrmann J.L."/>
            <person name="Geoghagen N.S.M."/>
            <person name="Gnehm C.L."/>
            <person name="McDonald L.A."/>
            <person name="Small K.V."/>
            <person name="Fraser C.M."/>
            <person name="Smith H.O."/>
            <person name="Venter J.C."/>
        </authorList>
    </citation>
    <scope>NUCLEOTIDE SEQUENCE [LARGE SCALE GENOMIC DNA]</scope>
    <source>
        <strain>ATCC 51907 / DSM 11121 / KW20 / Rd</strain>
    </source>
</reference>
<name>RSEP_HAEIN</name>
<protein>
    <recommendedName>
        <fullName>Regulator of sigma E protease</fullName>
        <ecNumber>3.4.24.-</ecNumber>
    </recommendedName>
    <alternativeName>
        <fullName>S2P endopeptidase</fullName>
    </alternativeName>
    <alternativeName>
        <fullName>Site-2 protease RseP</fullName>
        <shortName>S2P protease RseP</shortName>
    </alternativeName>
    <alternativeName>
        <fullName>Site-2-type intramembrane protease</fullName>
    </alternativeName>
</protein>
<comment type="function">
    <text evidence="1">A site-2 regulated intramembrane protease (S2P) that cleaves a peptide bond in the transmembrane region of RseA. Part of a regulated intramembrane proteolysis (RIP) cascade. Acts on DegS-cleaved RseA to release the cytoplasmic domain of RseA. This provides the cell with sigma-E (RpoE) activity through the proteolysis of RseA (By similarity).</text>
</comment>
<comment type="cofactor">
    <cofactor evidence="1">
        <name>Zn(2+)</name>
        <dbReference type="ChEBI" id="CHEBI:29105"/>
    </cofactor>
</comment>
<comment type="subunit">
    <text evidence="1">Interacts with RseA.</text>
</comment>
<comment type="subcellular location">
    <subcellularLocation>
        <location evidence="1">Cell inner membrane</location>
        <topology evidence="1">Multi-pass membrane protein</topology>
    </subcellularLocation>
</comment>
<comment type="domain">
    <text evidence="1">The 2 circularly premutated PDZ domains act to negatively regulate protease action on intact RseA.</text>
</comment>
<comment type="miscellaneous">
    <text evidence="1">Regulated intramembrane proteolysis (RIP) occurs when an extracytoplasmic signal triggers a concerted proteolytic cascade to transmit information and elicit cellular responses. A membrane-spanning regulatory substrate protein is first cut extracytoplasmically (site-1 protease, S1P), then within the membrane itself (site-2 protease, S2P, this enzyme), while cytoplasmic proteases finish degrading the regulatory protein, liberating the effector protein (By similarity).</text>
</comment>
<comment type="similarity">
    <text evidence="4">Belongs to the peptidase M50B family.</text>
</comment>
<evidence type="ECO:0000250" key="1"/>
<evidence type="ECO:0000255" key="2"/>
<evidence type="ECO:0000255" key="3">
    <source>
        <dbReference type="PROSITE-ProRule" id="PRU10095"/>
    </source>
</evidence>
<evidence type="ECO:0000305" key="4"/>
<feature type="chain" id="PRO_0000088442" description="Regulator of sigma E protease">
    <location>
        <begin position="1"/>
        <end position="443"/>
    </location>
</feature>
<feature type="transmembrane region" description="Helical" evidence="2">
    <location>
        <begin position="98"/>
        <end position="118"/>
    </location>
</feature>
<feature type="transmembrane region" description="Helical" evidence="2">
    <location>
        <begin position="369"/>
        <end position="389"/>
    </location>
</feature>
<feature type="transmembrane region" description="Helical" evidence="2">
    <location>
        <begin position="423"/>
        <end position="443"/>
    </location>
</feature>
<feature type="domain" description="PDZ 1">
    <location>
        <begin position="106"/>
        <end position="185"/>
    </location>
</feature>
<feature type="domain" description="PDZ 2">
    <location>
        <begin position="198"/>
        <end position="287"/>
    </location>
</feature>
<feature type="active site" evidence="3">
    <location>
        <position position="22"/>
    </location>
</feature>
<feature type="binding site" evidence="3">
    <location>
        <position position="21"/>
    </location>
    <ligand>
        <name>Zn(2+)</name>
        <dbReference type="ChEBI" id="CHEBI:29105"/>
        <note>catalytic</note>
    </ligand>
</feature>
<feature type="binding site" evidence="3">
    <location>
        <position position="25"/>
    </location>
    <ligand>
        <name>Zn(2+)</name>
        <dbReference type="ChEBI" id="CHEBI:29105"/>
        <note>catalytic</note>
    </ligand>
</feature>
<keyword id="KW-0997">Cell inner membrane</keyword>
<keyword id="KW-1003">Cell membrane</keyword>
<keyword id="KW-0378">Hydrolase</keyword>
<keyword id="KW-0472">Membrane</keyword>
<keyword id="KW-0479">Metal-binding</keyword>
<keyword id="KW-0482">Metalloprotease</keyword>
<keyword id="KW-0645">Protease</keyword>
<keyword id="KW-1185">Reference proteome</keyword>
<keyword id="KW-0677">Repeat</keyword>
<keyword id="KW-0812">Transmembrane</keyword>
<keyword id="KW-1133">Transmembrane helix</keyword>
<keyword id="KW-0862">Zinc</keyword>
<gene>
    <name type="primary">rsep</name>
    <name type="ordered locus">HI_0918</name>
</gene>
<accession>P44936</accession>
<dbReference type="EC" id="3.4.24.-"/>
<dbReference type="EMBL" id="L42023">
    <property type="protein sequence ID" value="AAC22576.1"/>
    <property type="molecule type" value="Genomic_DNA"/>
</dbReference>
<dbReference type="PIR" id="D64161">
    <property type="entry name" value="D64161"/>
</dbReference>
<dbReference type="RefSeq" id="NP_439078.1">
    <property type="nucleotide sequence ID" value="NC_000907.1"/>
</dbReference>
<dbReference type="SMR" id="P44936"/>
<dbReference type="STRING" id="71421.HI_0918"/>
<dbReference type="EnsemblBacteria" id="AAC22576">
    <property type="protein sequence ID" value="AAC22576"/>
    <property type="gene ID" value="HI_0918"/>
</dbReference>
<dbReference type="KEGG" id="hin:HI_0918"/>
<dbReference type="PATRIC" id="fig|71421.8.peg.959"/>
<dbReference type="eggNOG" id="COG0750">
    <property type="taxonomic scope" value="Bacteria"/>
</dbReference>
<dbReference type="HOGENOM" id="CLU_025778_0_2_6"/>
<dbReference type="OrthoDB" id="9782003at2"/>
<dbReference type="PhylomeDB" id="P44936"/>
<dbReference type="BioCyc" id="HINF71421:G1GJ1-957-MONOMER"/>
<dbReference type="Proteomes" id="UP000000579">
    <property type="component" value="Chromosome"/>
</dbReference>
<dbReference type="GO" id="GO:0005886">
    <property type="term" value="C:plasma membrane"/>
    <property type="evidence" value="ECO:0007669"/>
    <property type="project" value="UniProtKB-SubCell"/>
</dbReference>
<dbReference type="GO" id="GO:0046872">
    <property type="term" value="F:metal ion binding"/>
    <property type="evidence" value="ECO:0007669"/>
    <property type="project" value="UniProtKB-KW"/>
</dbReference>
<dbReference type="GO" id="GO:0004222">
    <property type="term" value="F:metalloendopeptidase activity"/>
    <property type="evidence" value="ECO:0007669"/>
    <property type="project" value="InterPro"/>
</dbReference>
<dbReference type="GO" id="GO:0006508">
    <property type="term" value="P:proteolysis"/>
    <property type="evidence" value="ECO:0007669"/>
    <property type="project" value="UniProtKB-KW"/>
</dbReference>
<dbReference type="CDD" id="cd23082">
    <property type="entry name" value="cpPDZ1_EcRseP-like"/>
    <property type="match status" value="1"/>
</dbReference>
<dbReference type="CDD" id="cd23081">
    <property type="entry name" value="cpPDZ_EcRseP-like"/>
    <property type="match status" value="1"/>
</dbReference>
<dbReference type="CDD" id="cd06163">
    <property type="entry name" value="S2P-M50_PDZ_RseP-like"/>
    <property type="match status" value="2"/>
</dbReference>
<dbReference type="Gene3D" id="2.30.42.10">
    <property type="match status" value="2"/>
</dbReference>
<dbReference type="InterPro" id="IPR001478">
    <property type="entry name" value="PDZ"/>
</dbReference>
<dbReference type="InterPro" id="IPR036034">
    <property type="entry name" value="PDZ_sf"/>
</dbReference>
<dbReference type="InterPro" id="IPR004387">
    <property type="entry name" value="Pept_M50_Zn"/>
</dbReference>
<dbReference type="InterPro" id="IPR008915">
    <property type="entry name" value="Peptidase_M50"/>
</dbReference>
<dbReference type="NCBIfam" id="NF008046">
    <property type="entry name" value="PRK10779.1"/>
    <property type="match status" value="1"/>
</dbReference>
<dbReference type="NCBIfam" id="TIGR00054">
    <property type="entry name" value="RIP metalloprotease RseP"/>
    <property type="match status" value="1"/>
</dbReference>
<dbReference type="PANTHER" id="PTHR42837:SF2">
    <property type="entry name" value="MEMBRANE METALLOPROTEASE ARASP2, CHLOROPLASTIC-RELATED"/>
    <property type="match status" value="1"/>
</dbReference>
<dbReference type="PANTHER" id="PTHR42837">
    <property type="entry name" value="REGULATOR OF SIGMA-E PROTEASE RSEP"/>
    <property type="match status" value="1"/>
</dbReference>
<dbReference type="Pfam" id="PF02163">
    <property type="entry name" value="Peptidase_M50"/>
    <property type="match status" value="1"/>
</dbReference>
<dbReference type="SMART" id="SM00228">
    <property type="entry name" value="PDZ"/>
    <property type="match status" value="2"/>
</dbReference>
<dbReference type="SUPFAM" id="SSF50156">
    <property type="entry name" value="PDZ domain-like"/>
    <property type="match status" value="2"/>
</dbReference>
<dbReference type="PROSITE" id="PS00142">
    <property type="entry name" value="ZINC_PROTEASE"/>
    <property type="match status" value="1"/>
</dbReference>
<proteinExistence type="inferred from homology"/>
<organism>
    <name type="scientific">Haemophilus influenzae (strain ATCC 51907 / DSM 11121 / KW20 / Rd)</name>
    <dbReference type="NCBI Taxonomy" id="71421"/>
    <lineage>
        <taxon>Bacteria</taxon>
        <taxon>Pseudomonadati</taxon>
        <taxon>Pseudomonadota</taxon>
        <taxon>Gammaproteobacteria</taxon>
        <taxon>Pasteurellales</taxon>
        <taxon>Pasteurellaceae</taxon>
        <taxon>Haemophilus</taxon>
    </lineage>
</organism>